<evidence type="ECO:0000255" key="1"/>
<evidence type="ECO:0000303" key="2">
    <source>
    </source>
</evidence>
<evidence type="ECO:0000305" key="3"/>
<evidence type="ECO:0000312" key="4">
    <source>
        <dbReference type="Araport" id="AT4G21903"/>
    </source>
</evidence>
<evidence type="ECO:0000312" key="5">
    <source>
        <dbReference type="EMBL" id="AL021890"/>
    </source>
</evidence>
<reference key="1">
    <citation type="journal article" date="1999" name="Nature">
        <title>Sequence and analysis of chromosome 4 of the plant Arabidopsis thaliana.</title>
        <authorList>
            <person name="Mayer K.F.X."/>
            <person name="Schueller C."/>
            <person name="Wambutt R."/>
            <person name="Murphy G."/>
            <person name="Volckaert G."/>
            <person name="Pohl T."/>
            <person name="Duesterhoeft A."/>
            <person name="Stiekema W."/>
            <person name="Entian K.-D."/>
            <person name="Terryn N."/>
            <person name="Harris B."/>
            <person name="Ansorge W."/>
            <person name="Brandt P."/>
            <person name="Grivell L.A."/>
            <person name="Rieger M."/>
            <person name="Weichselgartner M."/>
            <person name="de Simone V."/>
            <person name="Obermaier B."/>
            <person name="Mache R."/>
            <person name="Mueller M."/>
            <person name="Kreis M."/>
            <person name="Delseny M."/>
            <person name="Puigdomenech P."/>
            <person name="Watson M."/>
            <person name="Schmidtheini T."/>
            <person name="Reichert B."/>
            <person name="Portetelle D."/>
            <person name="Perez-Alonso M."/>
            <person name="Boutry M."/>
            <person name="Bancroft I."/>
            <person name="Vos P."/>
            <person name="Hoheisel J."/>
            <person name="Zimmermann W."/>
            <person name="Wedler H."/>
            <person name="Ridley P."/>
            <person name="Langham S.-A."/>
            <person name="McCullagh B."/>
            <person name="Bilham L."/>
            <person name="Robben J."/>
            <person name="van der Schueren J."/>
            <person name="Grymonprez B."/>
            <person name="Chuang Y.-J."/>
            <person name="Vandenbussche F."/>
            <person name="Braeken M."/>
            <person name="Weltjens I."/>
            <person name="Voet M."/>
            <person name="Bastiaens I."/>
            <person name="Aert R."/>
            <person name="Defoor E."/>
            <person name="Weitzenegger T."/>
            <person name="Bothe G."/>
            <person name="Ramsperger U."/>
            <person name="Hilbert H."/>
            <person name="Braun M."/>
            <person name="Holzer E."/>
            <person name="Brandt A."/>
            <person name="Peters S."/>
            <person name="van Staveren M."/>
            <person name="Dirkse W."/>
            <person name="Mooijman P."/>
            <person name="Klein Lankhorst R."/>
            <person name="Rose M."/>
            <person name="Hauf J."/>
            <person name="Koetter P."/>
            <person name="Berneiser S."/>
            <person name="Hempel S."/>
            <person name="Feldpausch M."/>
            <person name="Lamberth S."/>
            <person name="Van den Daele H."/>
            <person name="De Keyser A."/>
            <person name="Buysshaert C."/>
            <person name="Gielen J."/>
            <person name="Villarroel R."/>
            <person name="De Clercq R."/>
            <person name="van Montagu M."/>
            <person name="Rogers J."/>
            <person name="Cronin A."/>
            <person name="Quail M.A."/>
            <person name="Bray-Allen S."/>
            <person name="Clark L."/>
            <person name="Doggett J."/>
            <person name="Hall S."/>
            <person name="Kay M."/>
            <person name="Lennard N."/>
            <person name="McLay K."/>
            <person name="Mayes R."/>
            <person name="Pettett A."/>
            <person name="Rajandream M.A."/>
            <person name="Lyne M."/>
            <person name="Benes V."/>
            <person name="Rechmann S."/>
            <person name="Borkova D."/>
            <person name="Bloecker H."/>
            <person name="Scharfe M."/>
            <person name="Grimm M."/>
            <person name="Loehnert T.-H."/>
            <person name="Dose S."/>
            <person name="de Haan M."/>
            <person name="Maarse A.C."/>
            <person name="Schaefer M."/>
            <person name="Mueller-Auer S."/>
            <person name="Gabel C."/>
            <person name="Fuchs M."/>
            <person name="Fartmann B."/>
            <person name="Granderath K."/>
            <person name="Dauner D."/>
            <person name="Herzl A."/>
            <person name="Neumann S."/>
            <person name="Argiriou A."/>
            <person name="Vitale D."/>
            <person name="Liguori R."/>
            <person name="Piravandi E."/>
            <person name="Massenet O."/>
            <person name="Quigley F."/>
            <person name="Clabauld G."/>
            <person name="Muendlein A."/>
            <person name="Felber R."/>
            <person name="Schnabl S."/>
            <person name="Hiller R."/>
            <person name="Schmidt W."/>
            <person name="Lecharny A."/>
            <person name="Aubourg S."/>
            <person name="Chefdor F."/>
            <person name="Cooke R."/>
            <person name="Berger C."/>
            <person name="Monfort A."/>
            <person name="Casacuberta E."/>
            <person name="Gibbons T."/>
            <person name="Weber N."/>
            <person name="Vandenbol M."/>
            <person name="Bargues M."/>
            <person name="Terol J."/>
            <person name="Torres A."/>
            <person name="Perez-Perez A."/>
            <person name="Purnelle B."/>
            <person name="Bent E."/>
            <person name="Johnson S."/>
            <person name="Tacon D."/>
            <person name="Jesse T."/>
            <person name="Heijnen L."/>
            <person name="Schwarz S."/>
            <person name="Scholler P."/>
            <person name="Heber S."/>
            <person name="Francs P."/>
            <person name="Bielke C."/>
            <person name="Frishman D."/>
            <person name="Haase D."/>
            <person name="Lemcke K."/>
            <person name="Mewes H.-W."/>
            <person name="Stocker S."/>
            <person name="Zaccaria P."/>
            <person name="Bevan M."/>
            <person name="Wilson R.K."/>
            <person name="de la Bastide M."/>
            <person name="Habermann K."/>
            <person name="Parnell L."/>
            <person name="Dedhia N."/>
            <person name="Gnoj L."/>
            <person name="Schutz K."/>
            <person name="Huang E."/>
            <person name="Spiegel L."/>
            <person name="Sekhon M."/>
            <person name="Murray J."/>
            <person name="Sheet P."/>
            <person name="Cordes M."/>
            <person name="Abu-Threideh J."/>
            <person name="Stoneking T."/>
            <person name="Kalicki J."/>
            <person name="Graves T."/>
            <person name="Harmon G."/>
            <person name="Edwards J."/>
            <person name="Latreille P."/>
            <person name="Courtney L."/>
            <person name="Cloud J."/>
            <person name="Abbott A."/>
            <person name="Scott K."/>
            <person name="Johnson D."/>
            <person name="Minx P."/>
            <person name="Bentley D."/>
            <person name="Fulton B."/>
            <person name="Miller N."/>
            <person name="Greco T."/>
            <person name="Kemp K."/>
            <person name="Kramer J."/>
            <person name="Fulton L."/>
            <person name="Mardis E."/>
            <person name="Dante M."/>
            <person name="Pepin K."/>
            <person name="Hillier L.W."/>
            <person name="Nelson J."/>
            <person name="Spieth J."/>
            <person name="Ryan E."/>
            <person name="Andrews S."/>
            <person name="Geisel C."/>
            <person name="Layman D."/>
            <person name="Du H."/>
            <person name="Ali J."/>
            <person name="Berghoff A."/>
            <person name="Jones K."/>
            <person name="Drone K."/>
            <person name="Cotton M."/>
            <person name="Joshu C."/>
            <person name="Antonoiu B."/>
            <person name="Zidanic M."/>
            <person name="Strong C."/>
            <person name="Sun H."/>
            <person name="Lamar B."/>
            <person name="Yordan C."/>
            <person name="Ma P."/>
            <person name="Zhong J."/>
            <person name="Preston R."/>
            <person name="Vil D."/>
            <person name="Shekher M."/>
            <person name="Matero A."/>
            <person name="Shah R."/>
            <person name="Swaby I.K."/>
            <person name="O'Shaughnessy A."/>
            <person name="Rodriguez M."/>
            <person name="Hoffman J."/>
            <person name="Till S."/>
            <person name="Granat S."/>
            <person name="Shohdy N."/>
            <person name="Hasegawa A."/>
            <person name="Hameed A."/>
            <person name="Lodhi M."/>
            <person name="Johnson A."/>
            <person name="Chen E."/>
            <person name="Marra M.A."/>
            <person name="Martienssen R."/>
            <person name="McCombie W.R."/>
        </authorList>
    </citation>
    <scope>NUCLEOTIDE SEQUENCE [LARGE SCALE GENOMIC DNA]</scope>
    <source>
        <strain>cv. Columbia</strain>
    </source>
</reference>
<reference key="2">
    <citation type="journal article" date="2017" name="Plant J.">
        <title>Araport11: a complete reannotation of the Arabidopsis thaliana reference genome.</title>
        <authorList>
            <person name="Cheng C.Y."/>
            <person name="Krishnakumar V."/>
            <person name="Chan A.P."/>
            <person name="Thibaud-Nissen F."/>
            <person name="Schobel S."/>
            <person name="Town C.D."/>
        </authorList>
    </citation>
    <scope>GENOME REANNOTATION</scope>
    <source>
        <strain>cv. Columbia</strain>
    </source>
</reference>
<reference key="3">
    <citation type="journal article" date="2002" name="J. Biol. Chem.">
        <title>Functional cloning and characterization of a plant efflux carrier for multidrug and heavy metal detoxification.</title>
        <authorList>
            <person name="Li L."/>
            <person name="He Z."/>
            <person name="Pandey G.K."/>
            <person name="Tsuchiya T."/>
            <person name="Luan S."/>
        </authorList>
    </citation>
    <scope>GENE FAMILY</scope>
    <scope>NOMENCLATURE</scope>
</reference>
<reference key="4">
    <citation type="journal article" date="2003" name="Eur. J. Biochem.">
        <title>The multidrug/oligosaccharidyl-lipid/polysaccharide (MOP) exporter superfamily.</title>
        <authorList>
            <person name="Hvorup R.N."/>
            <person name="Winnen B."/>
            <person name="Chang A.B."/>
            <person name="Jiang Y."/>
            <person name="Zhou X.F."/>
            <person name="Saier M.H. Jr."/>
        </authorList>
    </citation>
    <scope>GENE FAMILY</scope>
</reference>
<protein>
    <recommendedName>
        <fullName evidence="2">Protein DETOXIFICATION 38</fullName>
        <shortName evidence="2">AtDTX38</shortName>
    </recommendedName>
    <alternativeName>
        <fullName evidence="3">Multidrug and toxic compound extrusion protein 38</fullName>
        <shortName evidence="3">MATE protein 38</shortName>
    </alternativeName>
</protein>
<accession>F4JKB9</accession>
<name>DTX38_ARATH</name>
<sequence>MNGSNETVERRIELRRPLVDTEKKLPLEVGLESVLTESSLPYRRRVYLGMCIELKLLLRLALPAILVYLINGGMGISARIFAGHLGSTQLAAASIGNSSFSLVYALMLGMGSAVETLCGQAYGAHRYEMLGIYLQRATIVLALVGFPMTILYTFSYPILLLLGEPKTVSYMGSLYIAGLIPQIFAYAVYFTAQKFLQAQSVVAPSAYISAAALVLQISLTWITVYAMGQGLMGIAYVLTISWWFIVGAQTFYVITSVRFKDTWTGFSWKSLHGLWSFFKLSAGSAVMICLELWYTQILVLLAGLLKDPALSLDSLSICMSISALSFMVSVGFNAAVSVRTSNELGAGNPKSALFSTWTATFVSFVISVVEALVVIASRDNVSYIFTSDADVAKAVSDLCPFLAVTIILNGIQPVLSGVAVGCGWQTYVAYVNIGCYYIVGIPIGCILGFTFNFQAKGIWTGMIGGTLMQTLILLYVTYQADWDKEVEKARKRLDMWDDKEPLQN</sequence>
<gene>
    <name evidence="2" type="primary">DTX38</name>
    <name evidence="4" type="ordered locus">At4g21903</name>
    <name evidence="5" type="ORF">T8O5</name>
</gene>
<keyword id="KW-0025">Alternative splicing</keyword>
<keyword id="KW-0472">Membrane</keyword>
<keyword id="KW-1185">Reference proteome</keyword>
<keyword id="KW-0812">Transmembrane</keyword>
<keyword id="KW-1133">Transmembrane helix</keyword>
<keyword id="KW-0813">Transport</keyword>
<feature type="chain" id="PRO_0000434079" description="Protein DETOXIFICATION 38">
    <location>
        <begin position="1"/>
        <end position="504"/>
    </location>
</feature>
<feature type="transmembrane region" description="Helical" evidence="1">
    <location>
        <begin position="56"/>
        <end position="76"/>
    </location>
</feature>
<feature type="transmembrane region" description="Helical" evidence="1">
    <location>
        <begin position="90"/>
        <end position="110"/>
    </location>
</feature>
<feature type="transmembrane region" description="Helical" evidence="1">
    <location>
        <begin position="139"/>
        <end position="159"/>
    </location>
</feature>
<feature type="transmembrane region" description="Helical" evidence="1">
    <location>
        <begin position="170"/>
        <end position="190"/>
    </location>
</feature>
<feature type="transmembrane region" description="Helical" evidence="1">
    <location>
        <begin position="208"/>
        <end position="228"/>
    </location>
</feature>
<feature type="transmembrane region" description="Helical" evidence="1">
    <location>
        <begin position="234"/>
        <end position="254"/>
    </location>
</feature>
<feature type="transmembrane region" description="Helical" evidence="1">
    <location>
        <begin position="273"/>
        <end position="295"/>
    </location>
</feature>
<feature type="transmembrane region" description="Helical" evidence="1">
    <location>
        <begin position="316"/>
        <end position="336"/>
    </location>
</feature>
<feature type="transmembrane region" description="Helical" evidence="1">
    <location>
        <begin position="356"/>
        <end position="376"/>
    </location>
</feature>
<feature type="transmembrane region" description="Helical" evidence="1">
    <location>
        <begin position="401"/>
        <end position="421"/>
    </location>
</feature>
<feature type="transmembrane region" description="Helical" evidence="1">
    <location>
        <begin position="433"/>
        <end position="453"/>
    </location>
</feature>
<feature type="transmembrane region" description="Helical" evidence="1">
    <location>
        <begin position="457"/>
        <end position="477"/>
    </location>
</feature>
<comment type="subcellular location">
    <subcellularLocation>
        <location evidence="1">Membrane</location>
        <topology evidence="1">Multi-pass membrane protein</topology>
    </subcellularLocation>
</comment>
<comment type="alternative products">
    <event type="alternative splicing"/>
    <isoform>
        <id>F4JKB9-1</id>
        <name>1</name>
        <sequence type="displayed"/>
    </isoform>
    <text>A number of isoforms are produced. According to EST sequences.</text>
</comment>
<comment type="similarity">
    <text evidence="3">Belongs to the multi antimicrobial extrusion (MATE) (TC 2.A.66.1) family.</text>
</comment>
<dbReference type="EMBL" id="AL021890">
    <property type="status" value="NOT_ANNOTATED_CDS"/>
    <property type="molecule type" value="Genomic_DNA"/>
</dbReference>
<dbReference type="EMBL" id="CP002687">
    <property type="protein sequence ID" value="AEE84523.1"/>
    <property type="molecule type" value="Genomic_DNA"/>
</dbReference>
<dbReference type="RefSeq" id="NP_001119025.1">
    <molecule id="F4JKB9-1"/>
    <property type="nucleotide sequence ID" value="NM_001125553.2"/>
</dbReference>
<dbReference type="SMR" id="F4JKB9"/>
<dbReference type="FunCoup" id="F4JKB9">
    <property type="interactions" value="201"/>
</dbReference>
<dbReference type="PaxDb" id="3702-AT4G21903.2"/>
<dbReference type="EnsemblPlants" id="AT4G21903.1">
    <molecule id="F4JKB9-1"/>
    <property type="protein sequence ID" value="AT4G21903.1"/>
    <property type="gene ID" value="AT4G21903"/>
</dbReference>
<dbReference type="GeneID" id="6241480"/>
<dbReference type="Gramene" id="AT4G21903.1">
    <molecule id="F4JKB9-1"/>
    <property type="protein sequence ID" value="AT4G21903.1"/>
    <property type="gene ID" value="AT4G21903"/>
</dbReference>
<dbReference type="KEGG" id="ath:AT4G21903"/>
<dbReference type="Araport" id="AT4G21903"/>
<dbReference type="TAIR" id="AT4G21903"/>
<dbReference type="eggNOG" id="KOG1347">
    <property type="taxonomic scope" value="Eukaryota"/>
</dbReference>
<dbReference type="HOGENOM" id="CLU_012893_1_4_1"/>
<dbReference type="InParanoid" id="F4JKB9"/>
<dbReference type="OMA" id="LEVWYCQ"/>
<dbReference type="OrthoDB" id="2126698at2759"/>
<dbReference type="PRO" id="PR:F4JKB9"/>
<dbReference type="Proteomes" id="UP000006548">
    <property type="component" value="Chromosome 4"/>
</dbReference>
<dbReference type="ExpressionAtlas" id="F4JKB9">
    <property type="expression patterns" value="baseline and differential"/>
</dbReference>
<dbReference type="GO" id="GO:0016020">
    <property type="term" value="C:membrane"/>
    <property type="evidence" value="ECO:0007669"/>
    <property type="project" value="UniProtKB-SubCell"/>
</dbReference>
<dbReference type="GO" id="GO:0015297">
    <property type="term" value="F:antiporter activity"/>
    <property type="evidence" value="ECO:0007669"/>
    <property type="project" value="InterPro"/>
</dbReference>
<dbReference type="GO" id="GO:0042910">
    <property type="term" value="F:xenobiotic transmembrane transporter activity"/>
    <property type="evidence" value="ECO:0007669"/>
    <property type="project" value="InterPro"/>
</dbReference>
<dbReference type="GO" id="GO:1990961">
    <property type="term" value="P:xenobiotic detoxification by transmembrane export across the plasma membrane"/>
    <property type="evidence" value="ECO:0007669"/>
    <property type="project" value="InterPro"/>
</dbReference>
<dbReference type="CDD" id="cd13132">
    <property type="entry name" value="MATE_eukaryotic"/>
    <property type="match status" value="1"/>
</dbReference>
<dbReference type="InterPro" id="IPR045069">
    <property type="entry name" value="MATE_euk"/>
</dbReference>
<dbReference type="InterPro" id="IPR002528">
    <property type="entry name" value="MATE_fam"/>
</dbReference>
<dbReference type="NCBIfam" id="TIGR00797">
    <property type="entry name" value="matE"/>
    <property type="match status" value="1"/>
</dbReference>
<dbReference type="PANTHER" id="PTHR11206">
    <property type="entry name" value="MULTIDRUG RESISTANCE PROTEIN"/>
    <property type="match status" value="1"/>
</dbReference>
<dbReference type="Pfam" id="PF01554">
    <property type="entry name" value="MatE"/>
    <property type="match status" value="2"/>
</dbReference>
<proteinExistence type="inferred from homology"/>
<organism>
    <name type="scientific">Arabidopsis thaliana</name>
    <name type="common">Mouse-ear cress</name>
    <dbReference type="NCBI Taxonomy" id="3702"/>
    <lineage>
        <taxon>Eukaryota</taxon>
        <taxon>Viridiplantae</taxon>
        <taxon>Streptophyta</taxon>
        <taxon>Embryophyta</taxon>
        <taxon>Tracheophyta</taxon>
        <taxon>Spermatophyta</taxon>
        <taxon>Magnoliopsida</taxon>
        <taxon>eudicotyledons</taxon>
        <taxon>Gunneridae</taxon>
        <taxon>Pentapetalae</taxon>
        <taxon>rosids</taxon>
        <taxon>malvids</taxon>
        <taxon>Brassicales</taxon>
        <taxon>Brassicaceae</taxon>
        <taxon>Camelineae</taxon>
        <taxon>Arabidopsis</taxon>
    </lineage>
</organism>